<feature type="chain" id="PRO_0000307231" description="N-acetylneuraminate (7)9-O-acetyltransferase">
    <location>
        <begin position="1"/>
        <end position="797"/>
    </location>
</feature>
<feature type="topological domain" description="Cytoplasmic" evidence="5">
    <location>
        <begin position="1"/>
        <end position="18"/>
    </location>
</feature>
<feature type="transmembrane region" description="Helical" evidence="2">
    <location>
        <begin position="19"/>
        <end position="39"/>
    </location>
</feature>
<feature type="topological domain" description="Lumenal" evidence="1">
    <location>
        <begin position="40"/>
        <end position="313"/>
    </location>
</feature>
<feature type="transmembrane region" description="Helical" evidence="2">
    <location>
        <begin position="314"/>
        <end position="334"/>
    </location>
</feature>
<feature type="topological domain" description="Cytoplasmic" evidence="5">
    <location>
        <begin position="335"/>
        <end position="363"/>
    </location>
</feature>
<feature type="transmembrane region" description="Helical" evidence="2">
    <location>
        <begin position="364"/>
        <end position="384"/>
    </location>
</feature>
<feature type="topological domain" description="Lumenal" evidence="5">
    <location>
        <begin position="385"/>
        <end position="395"/>
    </location>
</feature>
<feature type="transmembrane region" description="Helical" evidence="2">
    <location>
        <begin position="396"/>
        <end position="416"/>
    </location>
</feature>
<feature type="topological domain" description="Cytoplasmic" evidence="5">
    <location>
        <begin position="417"/>
        <end position="439"/>
    </location>
</feature>
<feature type="transmembrane region" description="Helical" evidence="2">
    <location>
        <begin position="440"/>
        <end position="460"/>
    </location>
</feature>
<feature type="topological domain" description="Lumenal" evidence="5">
    <location>
        <position position="461"/>
    </location>
</feature>
<feature type="transmembrane region" description="Helical" evidence="2">
    <location>
        <begin position="462"/>
        <end position="482"/>
    </location>
</feature>
<feature type="topological domain" description="Cytoplasmic" evidence="5">
    <location>
        <begin position="483"/>
        <end position="486"/>
    </location>
</feature>
<feature type="transmembrane region" description="Helical" evidence="2">
    <location>
        <begin position="487"/>
        <end position="507"/>
    </location>
</feature>
<feature type="topological domain" description="Lumenal" evidence="5">
    <location>
        <begin position="508"/>
        <end position="513"/>
    </location>
</feature>
<feature type="transmembrane region" description="Helical" evidence="2">
    <location>
        <begin position="514"/>
        <end position="534"/>
    </location>
</feature>
<feature type="topological domain" description="Cytoplasmic" evidence="5">
    <location>
        <begin position="535"/>
        <end position="546"/>
    </location>
</feature>
<feature type="transmembrane region" description="Helical" evidence="2">
    <location>
        <begin position="547"/>
        <end position="567"/>
    </location>
</feature>
<feature type="topological domain" description="Lumenal" evidence="5">
    <location>
        <begin position="568"/>
        <end position="599"/>
    </location>
</feature>
<feature type="transmembrane region" description="Helical" evidence="2">
    <location>
        <begin position="600"/>
        <end position="620"/>
    </location>
</feature>
<feature type="topological domain" description="Cytoplasmic" evidence="5">
    <location>
        <begin position="621"/>
        <end position="638"/>
    </location>
</feature>
<feature type="transmembrane region" description="Helical" evidence="2">
    <location>
        <begin position="639"/>
        <end position="659"/>
    </location>
</feature>
<feature type="topological domain" description="Lumenal" evidence="5">
    <location>
        <begin position="660"/>
        <end position="671"/>
    </location>
</feature>
<feature type="transmembrane region" description="Helical" evidence="2">
    <location>
        <begin position="672"/>
        <end position="692"/>
    </location>
</feature>
<feature type="topological domain" description="Cytoplasmic" evidence="5">
    <location>
        <begin position="693"/>
        <end position="698"/>
    </location>
</feature>
<feature type="transmembrane region" description="Helical" evidence="2">
    <location>
        <begin position="699"/>
        <end position="719"/>
    </location>
</feature>
<feature type="topological domain" description="Lumenal" evidence="5">
    <location>
        <begin position="720"/>
        <end position="725"/>
    </location>
</feature>
<feature type="transmembrane region" description="Helical" evidence="2">
    <location>
        <begin position="726"/>
        <end position="746"/>
    </location>
</feature>
<feature type="topological domain" description="Cytoplasmic" evidence="5">
    <location>
        <begin position="747"/>
        <end position="770"/>
    </location>
</feature>
<feature type="transmembrane region" description="Helical" evidence="2">
    <location>
        <begin position="771"/>
        <end position="791"/>
    </location>
</feature>
<feature type="topological domain" description="Lumenal" evidence="5">
    <location>
        <begin position="792"/>
        <end position="797"/>
    </location>
</feature>
<feature type="active site" description="Acyl-ester intermediate" evidence="1">
    <location>
        <position position="94"/>
    </location>
</feature>
<feature type="active site" evidence="1">
    <location>
        <position position="270"/>
    </location>
</feature>
<feature type="active site" evidence="1">
    <location>
        <position position="273"/>
    </location>
</feature>
<feature type="glycosylation site" description="N-linked (GlcNAc...) asparagine" evidence="2">
    <location>
        <position position="46"/>
    </location>
</feature>
<feature type="glycosylation site" description="N-linked (GlcNAc...) asparagine" evidence="2">
    <location>
        <position position="175"/>
    </location>
</feature>
<feature type="glycosylation site" description="N-linked (GlcNAc...) asparagine" evidence="2">
    <location>
        <position position="187"/>
    </location>
</feature>
<reference key="1">
    <citation type="journal article" date="2003" name="Genome Res.">
        <title>Identification of a large novel imprinted gene cluster on mouse proximal chromosome 6.</title>
        <authorList>
            <person name="Ono R."/>
            <person name="Shiura H."/>
            <person name="Aburatani H."/>
            <person name="Kohda T."/>
            <person name="Kaneko-Ishino T."/>
            <person name="Ishino F."/>
        </authorList>
    </citation>
    <scope>NUCLEOTIDE SEQUENCE [MRNA]</scope>
    <scope>TISSUE SPECIFICITY</scope>
    <scope>DEVELOPMENTAL STAGE</scope>
    <source>
        <strain>C57BL/6J</strain>
    </source>
</reference>
<reference key="2">
    <citation type="journal article" date="2004" name="Genome Res.">
        <title>The status, quality, and expansion of the NIH full-length cDNA project: the Mammalian Gene Collection (MGC).</title>
        <authorList>
            <consortium name="The MGC Project Team"/>
        </authorList>
    </citation>
    <scope>NUCLEOTIDE SEQUENCE [LARGE SCALE MRNA]</scope>
    <source>
        <strain>129</strain>
        <strain>C57BL/6J</strain>
        <tissue>Brain</tissue>
        <tissue>Mammary tumor</tissue>
    </source>
</reference>
<reference key="3">
    <citation type="journal article" date="2008" name="Curr. Biol.">
        <title>Global survey of genomic imprinting by transcriptome sequencing.</title>
        <authorList>
            <person name="Babak T."/>
            <person name="Deveale B."/>
            <person name="Armour C."/>
            <person name="Raymond C."/>
            <person name="Cleary M.A."/>
            <person name="van der Kooy D."/>
            <person name="Johnson J.M."/>
            <person name="Lim L.P."/>
        </authorList>
    </citation>
    <scope>IMPRINTING</scope>
</reference>
<keyword id="KW-0012">Acyltransferase</keyword>
<keyword id="KW-0325">Glycoprotein</keyword>
<keyword id="KW-0333">Golgi apparatus</keyword>
<keyword id="KW-0472">Membrane</keyword>
<keyword id="KW-1185">Reference proteome</keyword>
<keyword id="KW-0808">Transferase</keyword>
<keyword id="KW-0812">Transmembrane</keyword>
<keyword id="KW-1133">Transmembrane helix</keyword>
<comment type="function">
    <text evidence="1">Key enzyme in the biosynthesis of O-acetylated (O-Ac) sialoglycans such as gangliosides O-AcGD3 and O-AcGD2, which affect various processes such as cell-cell interactions, host-pathogen recognition. Catalyzes the transfer of an acetyl group from a donor, the acetyl-coenzyme-A molecule (acetyl-CoA), to the C7/8/9 OH-position of a sialic acid residue. The primary site of O-acetyl group transfer on sialic acid seems to depend on cell type and can be C7, from which the O-acetyl group could subsequently migrate to the C8 and then to the C9 position, or at C9 with possibility of migrating to the C8 and then to the C7 position. Together with ST8SIA1 (GD3 synthase) it increases the levels of ganglioside Ac-O-7-GD3. Can transfer the acetyl group from acetyl-CoA to free sialate (N-acetylneuraminate, Neu5Ac) in vitro, but has preferred substrate specificity for CMP-activated sialate (CMP-Neu5Ac), resulting in the formation of 9-O-acetylated CMP-Neu5Ac (CMP-Neu5,9Ac2). CMP-Neu5,9Ac2 may be used by sialyltransferases as a sialate donor for glycoconjugate acceptors such as ganglioside GD3. O-acetylation at position C9 of ganglioside GD3 can counteract the pro-apoptotic effects of the ganglioside GD3 in tumor cells.</text>
</comment>
<comment type="catalytic activity">
    <reaction evidence="1">
        <text>CMP-N-acetyl-beta-neuraminate + acetyl-CoA = CMP-N-acetyl-9-O-acetyl-beta-neuraminate + CoA</text>
        <dbReference type="Rhea" id="RHEA:81827"/>
        <dbReference type="ChEBI" id="CHEBI:57287"/>
        <dbReference type="ChEBI" id="CHEBI:57288"/>
        <dbReference type="ChEBI" id="CHEBI:57812"/>
        <dbReference type="ChEBI" id="CHEBI:229947"/>
        <dbReference type="EC" id="2.3.1.45"/>
    </reaction>
    <physiologicalReaction direction="left-to-right" evidence="1">
        <dbReference type="Rhea" id="RHEA:81828"/>
    </physiologicalReaction>
</comment>
<comment type="catalytic activity">
    <reaction evidence="1">
        <text>a ganglioside GD3 (d18:1(4E)) + acetyl-CoA = a ganglioside Ac-O-7-GD3(d18:1(4E)) + CoA</text>
        <dbReference type="Rhea" id="RHEA:79499"/>
        <dbReference type="ChEBI" id="CHEBI:57287"/>
        <dbReference type="ChEBI" id="CHEBI:57288"/>
        <dbReference type="ChEBI" id="CHEBI:78436"/>
        <dbReference type="ChEBI" id="CHEBI:228242"/>
    </reaction>
    <physiologicalReaction direction="left-to-right" evidence="1">
        <dbReference type="Rhea" id="RHEA:79500"/>
    </physiologicalReaction>
</comment>
<comment type="catalytic activity">
    <reaction evidence="1">
        <text>CMP-N-acetyl-beta-neuraminate + acetyl-CoA = CMP-N-acetyl-7-O-acetyl-beta-neuraminate + CoA</text>
        <dbReference type="Rhea" id="RHEA:79555"/>
        <dbReference type="ChEBI" id="CHEBI:57287"/>
        <dbReference type="ChEBI" id="CHEBI:57288"/>
        <dbReference type="ChEBI" id="CHEBI:57812"/>
        <dbReference type="ChEBI" id="CHEBI:229976"/>
    </reaction>
    <physiologicalReaction direction="left-to-right" evidence="1">
        <dbReference type="Rhea" id="RHEA:79556"/>
    </physiologicalReaction>
</comment>
<comment type="subcellular location">
    <subcellularLocation>
        <location evidence="1">Golgi apparatus membrane</location>
        <topology evidence="1">Multi-pass membrane protein</topology>
    </subcellularLocation>
</comment>
<comment type="tissue specificity">
    <text evidence="3">Ubiquitously expressed.</text>
</comment>
<comment type="developmental stage">
    <text evidence="3">Expressed in neonatal brain and in day 10 and 13 embryo.</text>
</comment>
<comment type="PTM">
    <text evidence="1">N-glycosylated.</text>
</comment>
<comment type="miscellaneous">
    <text evidence="4">The Casd1 locus is imprinted. Maternal inherited gene is expressed, while the paternal inherited gene is silenced.</text>
</comment>
<comment type="similarity">
    <text evidence="5">Belongs to the PC-esterase family. CASD1 subfamily.</text>
</comment>
<comment type="sequence caution" evidence="5">
    <conflict type="erroneous initiation">
        <sequence resource="EMBL-CDS" id="AAH18542"/>
    </conflict>
</comment>
<comment type="sequence caution" evidence="5">
    <conflict type="erroneous initiation">
        <sequence resource="EMBL-CDS" id="AAH38009"/>
    </conflict>
</comment>
<organism>
    <name type="scientific">Mus musculus</name>
    <name type="common">Mouse</name>
    <dbReference type="NCBI Taxonomy" id="10090"/>
    <lineage>
        <taxon>Eukaryota</taxon>
        <taxon>Metazoa</taxon>
        <taxon>Chordata</taxon>
        <taxon>Craniata</taxon>
        <taxon>Vertebrata</taxon>
        <taxon>Euteleostomi</taxon>
        <taxon>Mammalia</taxon>
        <taxon>Eutheria</taxon>
        <taxon>Euarchontoglires</taxon>
        <taxon>Glires</taxon>
        <taxon>Rodentia</taxon>
        <taxon>Myomorpha</taxon>
        <taxon>Muroidea</taxon>
        <taxon>Muridae</taxon>
        <taxon>Murinae</taxon>
        <taxon>Mus</taxon>
        <taxon>Mus</taxon>
    </lineage>
</organism>
<dbReference type="EC" id="2.3.1.45" evidence="1"/>
<dbReference type="EMBL" id="AB091829">
    <property type="protein sequence ID" value="BAC77246.1"/>
    <property type="molecule type" value="mRNA"/>
</dbReference>
<dbReference type="EMBL" id="BC018542">
    <property type="protein sequence ID" value="AAH18542.1"/>
    <property type="status" value="ALT_INIT"/>
    <property type="molecule type" value="mRNA"/>
</dbReference>
<dbReference type="EMBL" id="BC038009">
    <property type="protein sequence ID" value="AAH38009.1"/>
    <property type="status" value="ALT_INIT"/>
    <property type="molecule type" value="mRNA"/>
</dbReference>
<dbReference type="EMBL" id="BC058953">
    <property type="protein sequence ID" value="AAH58953.1"/>
    <property type="molecule type" value="mRNA"/>
</dbReference>
<dbReference type="EMBL" id="BC125377">
    <property type="protein sequence ID" value="AAI25378.1"/>
    <property type="molecule type" value="mRNA"/>
</dbReference>
<dbReference type="EMBL" id="BC125379">
    <property type="protein sequence ID" value="AAI25380.1"/>
    <property type="molecule type" value="mRNA"/>
</dbReference>
<dbReference type="CCDS" id="CCDS19896.1"/>
<dbReference type="RefSeq" id="NP_663373.2">
    <property type="nucleotide sequence ID" value="NM_145398.2"/>
</dbReference>
<dbReference type="BioGRID" id="229474">
    <property type="interactions" value="3"/>
</dbReference>
<dbReference type="FunCoup" id="Q7TN73">
    <property type="interactions" value="1249"/>
</dbReference>
<dbReference type="STRING" id="10090.ENSMUSP00000015333"/>
<dbReference type="GlyCosmos" id="Q7TN73">
    <property type="glycosylation" value="3 sites, No reported glycans"/>
</dbReference>
<dbReference type="GlyGen" id="Q7TN73">
    <property type="glycosylation" value="5 sites, 4 N-linked glycans (4 sites)"/>
</dbReference>
<dbReference type="iPTMnet" id="Q7TN73"/>
<dbReference type="PhosphoSitePlus" id="Q7TN73"/>
<dbReference type="SwissPalm" id="Q7TN73"/>
<dbReference type="PaxDb" id="10090-ENSMUSP00000015333"/>
<dbReference type="ProteomicsDB" id="265437"/>
<dbReference type="Antibodypedia" id="45361">
    <property type="antibodies" value="104 antibodies from 14 providers"/>
</dbReference>
<dbReference type="DNASU" id="213819"/>
<dbReference type="Ensembl" id="ENSMUST00000015333.12">
    <property type="protein sequence ID" value="ENSMUSP00000015333.6"/>
    <property type="gene ID" value="ENSMUSG00000015189.13"/>
</dbReference>
<dbReference type="GeneID" id="213819"/>
<dbReference type="KEGG" id="mmu:213819"/>
<dbReference type="UCSC" id="uc009avo.1">
    <property type="organism name" value="mouse"/>
</dbReference>
<dbReference type="AGR" id="MGI:2384865"/>
<dbReference type="CTD" id="64921"/>
<dbReference type="MGI" id="MGI:2384865">
    <property type="gene designation" value="Casd1"/>
</dbReference>
<dbReference type="VEuPathDB" id="HostDB:ENSMUSG00000015189"/>
<dbReference type="eggNOG" id="KOG1699">
    <property type="taxonomic scope" value="Eukaryota"/>
</dbReference>
<dbReference type="GeneTree" id="ENSGT00390000004037"/>
<dbReference type="HOGENOM" id="CLU_008003_1_0_1"/>
<dbReference type="InParanoid" id="Q7TN73"/>
<dbReference type="OMA" id="WSAREWA"/>
<dbReference type="OrthoDB" id="1932925at2759"/>
<dbReference type="PhylomeDB" id="Q7TN73"/>
<dbReference type="TreeFam" id="TF324898"/>
<dbReference type="BioGRID-ORCS" id="213819">
    <property type="hits" value="1 hit in 77 CRISPR screens"/>
</dbReference>
<dbReference type="ChiTaRS" id="Casd1">
    <property type="organism name" value="mouse"/>
</dbReference>
<dbReference type="PRO" id="PR:Q7TN73"/>
<dbReference type="Proteomes" id="UP000000589">
    <property type="component" value="Chromosome 6"/>
</dbReference>
<dbReference type="RNAct" id="Q7TN73">
    <property type="molecule type" value="protein"/>
</dbReference>
<dbReference type="Bgee" id="ENSMUSG00000015189">
    <property type="expression patterns" value="Expressed in CA1 field of hippocampus and 245 other cell types or tissues"/>
</dbReference>
<dbReference type="ExpressionAtlas" id="Q7TN73">
    <property type="expression patterns" value="baseline and differential"/>
</dbReference>
<dbReference type="GO" id="GO:0000139">
    <property type="term" value="C:Golgi membrane"/>
    <property type="evidence" value="ECO:0000250"/>
    <property type="project" value="UniProtKB"/>
</dbReference>
<dbReference type="GO" id="GO:0047186">
    <property type="term" value="F:N-acetylneuraminate 9-O-acetyltransferase activity"/>
    <property type="evidence" value="ECO:0000250"/>
    <property type="project" value="UniProtKB"/>
</dbReference>
<dbReference type="GO" id="GO:0005975">
    <property type="term" value="P:carbohydrate metabolic process"/>
    <property type="evidence" value="ECO:0000250"/>
    <property type="project" value="UniProtKB"/>
</dbReference>
<dbReference type="FunFam" id="3.40.50.1110:FF:000050">
    <property type="entry name" value="N-acetylneuraminate 9-O-acetyltransferase"/>
    <property type="match status" value="1"/>
</dbReference>
<dbReference type="InterPro" id="IPR012419">
    <property type="entry name" value="Cas1_AcylTrans_dom"/>
</dbReference>
<dbReference type="InterPro" id="IPR036915">
    <property type="entry name" value="Cyclin-like_sf"/>
</dbReference>
<dbReference type="InterPro" id="IPR057106">
    <property type="entry name" value="NXPE4_C"/>
</dbReference>
<dbReference type="PANTHER" id="PTHR13533">
    <property type="entry name" value="N-ACETYLNEURAMINATE 9-O-ACETYLTRANSFERASE"/>
    <property type="match status" value="1"/>
</dbReference>
<dbReference type="PANTHER" id="PTHR13533:SF1">
    <property type="entry name" value="N-ACETYLNEURAMINATE 9-O-ACETYLTRANSFERASE"/>
    <property type="match status" value="1"/>
</dbReference>
<dbReference type="Pfam" id="PF07779">
    <property type="entry name" value="Cas1_AcylT"/>
    <property type="match status" value="1"/>
</dbReference>
<dbReference type="Pfam" id="PF24536">
    <property type="entry name" value="NXPE4_C"/>
    <property type="match status" value="1"/>
</dbReference>
<dbReference type="SUPFAM" id="SSF47954">
    <property type="entry name" value="Cyclin-like"/>
    <property type="match status" value="1"/>
</dbReference>
<proteinExistence type="evidence at transcript level"/>
<protein>
    <recommendedName>
        <fullName evidence="1">N-acetylneuraminate (7)9-O-acetyltransferase</fullName>
        <ecNumber evidence="1">2.3.1.45</ecNumber>
    </recommendedName>
    <alternativeName>
        <fullName>CAS1 domain-containing protein 1</fullName>
    </alternativeName>
    <alternativeName>
        <fullName evidence="1">CAS1 protein</fullName>
        <shortName evidence="1">Cas1p</shortName>
    </alternativeName>
    <alternativeName>
        <fullName evidence="1">Sialate O-acetyltransferase</fullName>
        <shortName evidence="1">SOAT</shortName>
    </alternativeName>
</protein>
<accession>Q7TN73</accession>
<accession>Q1RN01</accession>
<accession>Q6PD39</accession>
<accession>Q8VEF5</accession>
<sequence>MAALAYNLGKREINHYFSVRSAKVLALVAVLLLAACHLASRRYRGNDSCEYLLSSGRFLGEKVWQPHSCMMHKYKISEAKTCLVDKHIAFIGDSRIRQLFYSFVKIINPQFKEEGNKHENIPFEDKAASVKVDFLWHPEVNGSMKQCIKVWTEDSVLKPHVIVAGAATWSIKIHNGSEEALAQYKMNITSIAPLLEKLAKTSDVYWVLQDPVYEDLLSENRKMITNEKIDAYNEAAVSILNSSTRTSKSNVKMFSVSKLIAQETIMESLDGLHLPESSRETSAMILMNVYCNKVVKPVDGSCCQPRPPLTLIQKLAACFFTLSIIGYFIFYVIHRNAHRKNKPCTDLESGEEKKNIINTPVSSLEILLQSFCKLGLIMAYFYMCDRANLFMKENKFYTHSSFFIPIIYILVLGVFYNENTKETKVLNREQTDEWKGWMQLVILIYHISGASTFLPVYMHIRVLVAAYLFQTGYGHFSYFWIKGDFGIHRVCQVLFRLNFLVVVLCIVMDRPYQFYYFVPLVTVWFMVIYVTLALWPQITQKKANGNFFWYLGLLLKLGLLLLCIWFLAYSQGAFEKIFSLWPLSKCFELEGSVYEWWFRWRLDRYVVFHGVLFAFIYLALQRRQILSEGKGEPLFSNKISNFLLFVSVVSFLTYSIWASSCKNKAECNELHPSVSVVQIVAFILIRNIPGYARSIYSSFFAWFGKISLELFICQYHIWLAADTRGILVLIPGNPTLNIIVSTFIFVCVAHEISQITTDLAQVVIPKDNPSLFRRLACTIAFFGGVLILSSIQDKSRL</sequence>
<name>CASD1_MOUSE</name>
<evidence type="ECO:0000250" key="1">
    <source>
        <dbReference type="UniProtKB" id="Q96PB1"/>
    </source>
</evidence>
<evidence type="ECO:0000255" key="2"/>
<evidence type="ECO:0000269" key="3">
    <source>
    </source>
</evidence>
<evidence type="ECO:0000269" key="4">
    <source>
    </source>
</evidence>
<evidence type="ECO:0000305" key="5"/>
<evidence type="ECO:0000312" key="6">
    <source>
        <dbReference type="MGI" id="MGI:2384865"/>
    </source>
</evidence>
<gene>
    <name evidence="6" type="primary">Casd1</name>
    <name type="synonym">Cas1</name>
    <name type="synonym">Cast1</name>
</gene>